<sequence>MYQPDFPPVPFRLGLYPVVDSVQWIERLLDAGVRTLQLRIKDRRDEEVEADVVAAIALGRRYNARLFINDYWRLAIKHQAYGVHLGQEDLQATDLNAIRAAGLRLGVSTHDDMEIDVALAARPSYIALGHVFPTQTKQMPSAPQGLEQLARHVERLSDYPTVAIGGISLARAPAVIATGVGSIAVVSAITQAADWRLATAQLLEIAGVGDE</sequence>
<proteinExistence type="inferred from homology"/>
<accession>B5Z089</accession>
<feature type="chain" id="PRO_1000093667" description="Thiamine-phosphate synthase">
    <location>
        <begin position="1"/>
        <end position="211"/>
    </location>
</feature>
<feature type="binding site" evidence="1">
    <location>
        <begin position="37"/>
        <end position="41"/>
    </location>
    <ligand>
        <name>4-amino-2-methyl-5-(diphosphooxymethyl)pyrimidine</name>
        <dbReference type="ChEBI" id="CHEBI:57841"/>
    </ligand>
</feature>
<feature type="binding site" evidence="1">
    <location>
        <position position="69"/>
    </location>
    <ligand>
        <name>4-amino-2-methyl-5-(diphosphooxymethyl)pyrimidine</name>
        <dbReference type="ChEBI" id="CHEBI:57841"/>
    </ligand>
</feature>
<feature type="binding site" evidence="1">
    <location>
        <position position="70"/>
    </location>
    <ligand>
        <name>Mg(2+)</name>
        <dbReference type="ChEBI" id="CHEBI:18420"/>
    </ligand>
</feature>
<feature type="binding site" evidence="1">
    <location>
        <position position="89"/>
    </location>
    <ligand>
        <name>Mg(2+)</name>
        <dbReference type="ChEBI" id="CHEBI:18420"/>
    </ligand>
</feature>
<feature type="binding site" evidence="1">
    <location>
        <position position="108"/>
    </location>
    <ligand>
        <name>4-amino-2-methyl-5-(diphosphooxymethyl)pyrimidine</name>
        <dbReference type="ChEBI" id="CHEBI:57841"/>
    </ligand>
</feature>
<feature type="binding site" evidence="1">
    <location>
        <begin position="134"/>
        <end position="136"/>
    </location>
    <ligand>
        <name>2-[(2R,5Z)-2-carboxy-4-methylthiazol-5(2H)-ylidene]ethyl phosphate</name>
        <dbReference type="ChEBI" id="CHEBI:62899"/>
    </ligand>
</feature>
<feature type="binding site" evidence="1">
    <location>
        <position position="137"/>
    </location>
    <ligand>
        <name>4-amino-2-methyl-5-(diphosphooxymethyl)pyrimidine</name>
        <dbReference type="ChEBI" id="CHEBI:57841"/>
    </ligand>
</feature>
<feature type="binding site" evidence="1">
    <location>
        <position position="166"/>
    </location>
    <ligand>
        <name>2-[(2R,5Z)-2-carboxy-4-methylthiazol-5(2H)-ylidene]ethyl phosphate</name>
        <dbReference type="ChEBI" id="CHEBI:62899"/>
    </ligand>
</feature>
<feature type="binding site" evidence="1">
    <location>
        <begin position="186"/>
        <end position="187"/>
    </location>
    <ligand>
        <name>2-[(2R,5Z)-2-carboxy-4-methylthiazol-5(2H)-ylidene]ethyl phosphate</name>
        <dbReference type="ChEBI" id="CHEBI:62899"/>
    </ligand>
</feature>
<keyword id="KW-0460">Magnesium</keyword>
<keyword id="KW-0479">Metal-binding</keyword>
<keyword id="KW-0784">Thiamine biosynthesis</keyword>
<keyword id="KW-0808">Transferase</keyword>
<name>THIE_ECO5E</name>
<protein>
    <recommendedName>
        <fullName evidence="1">Thiamine-phosphate synthase</fullName>
        <shortName evidence="1">TP synthase</shortName>
        <shortName evidence="1">TPS</shortName>
        <ecNumber evidence="1">2.5.1.3</ecNumber>
    </recommendedName>
    <alternativeName>
        <fullName evidence="1">Thiamine-phosphate pyrophosphorylase</fullName>
        <shortName evidence="1">TMP pyrophosphorylase</shortName>
        <shortName evidence="1">TMP-PPase</shortName>
    </alternativeName>
</protein>
<organism>
    <name type="scientific">Escherichia coli O157:H7 (strain EC4115 / EHEC)</name>
    <dbReference type="NCBI Taxonomy" id="444450"/>
    <lineage>
        <taxon>Bacteria</taxon>
        <taxon>Pseudomonadati</taxon>
        <taxon>Pseudomonadota</taxon>
        <taxon>Gammaproteobacteria</taxon>
        <taxon>Enterobacterales</taxon>
        <taxon>Enterobacteriaceae</taxon>
        <taxon>Escherichia</taxon>
    </lineage>
</organism>
<comment type="function">
    <text evidence="1">Condenses 4-methyl-5-(beta-hydroxyethyl)thiazole monophosphate (THZ-P) and 2-methyl-4-amino-5-hydroxymethyl pyrimidine pyrophosphate (HMP-PP) to form thiamine monophosphate (TMP).</text>
</comment>
<comment type="catalytic activity">
    <reaction evidence="1">
        <text>2-[(2R,5Z)-2-carboxy-4-methylthiazol-5(2H)-ylidene]ethyl phosphate + 4-amino-2-methyl-5-(diphosphooxymethyl)pyrimidine + 2 H(+) = thiamine phosphate + CO2 + diphosphate</text>
        <dbReference type="Rhea" id="RHEA:47844"/>
        <dbReference type="ChEBI" id="CHEBI:15378"/>
        <dbReference type="ChEBI" id="CHEBI:16526"/>
        <dbReference type="ChEBI" id="CHEBI:33019"/>
        <dbReference type="ChEBI" id="CHEBI:37575"/>
        <dbReference type="ChEBI" id="CHEBI:57841"/>
        <dbReference type="ChEBI" id="CHEBI:62899"/>
        <dbReference type="EC" id="2.5.1.3"/>
    </reaction>
</comment>
<comment type="catalytic activity">
    <reaction evidence="1">
        <text>2-(2-carboxy-4-methylthiazol-5-yl)ethyl phosphate + 4-amino-2-methyl-5-(diphosphooxymethyl)pyrimidine + 2 H(+) = thiamine phosphate + CO2 + diphosphate</text>
        <dbReference type="Rhea" id="RHEA:47848"/>
        <dbReference type="ChEBI" id="CHEBI:15378"/>
        <dbReference type="ChEBI" id="CHEBI:16526"/>
        <dbReference type="ChEBI" id="CHEBI:33019"/>
        <dbReference type="ChEBI" id="CHEBI:37575"/>
        <dbReference type="ChEBI" id="CHEBI:57841"/>
        <dbReference type="ChEBI" id="CHEBI:62890"/>
        <dbReference type="EC" id="2.5.1.3"/>
    </reaction>
</comment>
<comment type="catalytic activity">
    <reaction evidence="1">
        <text>4-methyl-5-(2-phosphooxyethyl)-thiazole + 4-amino-2-methyl-5-(diphosphooxymethyl)pyrimidine + H(+) = thiamine phosphate + diphosphate</text>
        <dbReference type="Rhea" id="RHEA:22328"/>
        <dbReference type="ChEBI" id="CHEBI:15378"/>
        <dbReference type="ChEBI" id="CHEBI:33019"/>
        <dbReference type="ChEBI" id="CHEBI:37575"/>
        <dbReference type="ChEBI" id="CHEBI:57841"/>
        <dbReference type="ChEBI" id="CHEBI:58296"/>
        <dbReference type="EC" id="2.5.1.3"/>
    </reaction>
</comment>
<comment type="cofactor">
    <cofactor evidence="1">
        <name>Mg(2+)</name>
        <dbReference type="ChEBI" id="CHEBI:18420"/>
    </cofactor>
    <text evidence="1">Binds 1 Mg(2+) ion per subunit.</text>
</comment>
<comment type="pathway">
    <text evidence="1">Cofactor biosynthesis; thiamine diphosphate biosynthesis; thiamine phosphate from 4-amino-2-methyl-5-diphosphomethylpyrimidine and 4-methyl-5-(2-phosphoethyl)-thiazole: step 1/1.</text>
</comment>
<comment type="similarity">
    <text evidence="1">Belongs to the thiamine-phosphate synthase family.</text>
</comment>
<gene>
    <name evidence="1" type="primary">thiE</name>
    <name type="ordered locus">ECH74115_5461</name>
</gene>
<reference key="1">
    <citation type="journal article" date="2011" name="Proc. Natl. Acad. Sci. U.S.A.">
        <title>Genomic anatomy of Escherichia coli O157:H7 outbreaks.</title>
        <authorList>
            <person name="Eppinger M."/>
            <person name="Mammel M.K."/>
            <person name="Leclerc J.E."/>
            <person name="Ravel J."/>
            <person name="Cebula T.A."/>
        </authorList>
    </citation>
    <scope>NUCLEOTIDE SEQUENCE [LARGE SCALE GENOMIC DNA]</scope>
    <source>
        <strain>EC4115 / EHEC</strain>
    </source>
</reference>
<evidence type="ECO:0000255" key="1">
    <source>
        <dbReference type="HAMAP-Rule" id="MF_00097"/>
    </source>
</evidence>
<dbReference type="EC" id="2.5.1.3" evidence="1"/>
<dbReference type="EMBL" id="CP001164">
    <property type="protein sequence ID" value="ACI37440.1"/>
    <property type="molecule type" value="Genomic_DNA"/>
</dbReference>
<dbReference type="RefSeq" id="WP_000284602.1">
    <property type="nucleotide sequence ID" value="NC_011353.1"/>
</dbReference>
<dbReference type="SMR" id="B5Z089"/>
<dbReference type="KEGG" id="ecf:ECH74115_5461"/>
<dbReference type="HOGENOM" id="CLU_018272_3_3_6"/>
<dbReference type="UniPathway" id="UPA00060">
    <property type="reaction ID" value="UER00141"/>
</dbReference>
<dbReference type="GO" id="GO:0005737">
    <property type="term" value="C:cytoplasm"/>
    <property type="evidence" value="ECO:0007669"/>
    <property type="project" value="TreeGrafter"/>
</dbReference>
<dbReference type="GO" id="GO:0000287">
    <property type="term" value="F:magnesium ion binding"/>
    <property type="evidence" value="ECO:0007669"/>
    <property type="project" value="UniProtKB-UniRule"/>
</dbReference>
<dbReference type="GO" id="GO:0004789">
    <property type="term" value="F:thiamine-phosphate diphosphorylase activity"/>
    <property type="evidence" value="ECO:0007669"/>
    <property type="project" value="UniProtKB-UniRule"/>
</dbReference>
<dbReference type="GO" id="GO:0009228">
    <property type="term" value="P:thiamine biosynthetic process"/>
    <property type="evidence" value="ECO:0007669"/>
    <property type="project" value="UniProtKB-KW"/>
</dbReference>
<dbReference type="GO" id="GO:0009229">
    <property type="term" value="P:thiamine diphosphate biosynthetic process"/>
    <property type="evidence" value="ECO:0007669"/>
    <property type="project" value="UniProtKB-UniRule"/>
</dbReference>
<dbReference type="CDD" id="cd00564">
    <property type="entry name" value="TMP_TenI"/>
    <property type="match status" value="1"/>
</dbReference>
<dbReference type="FunFam" id="3.20.20.70:FF:000064">
    <property type="entry name" value="Thiamine-phosphate synthase"/>
    <property type="match status" value="1"/>
</dbReference>
<dbReference type="Gene3D" id="3.20.20.70">
    <property type="entry name" value="Aldolase class I"/>
    <property type="match status" value="1"/>
</dbReference>
<dbReference type="HAMAP" id="MF_00097">
    <property type="entry name" value="TMP_synthase"/>
    <property type="match status" value="1"/>
</dbReference>
<dbReference type="InterPro" id="IPR013785">
    <property type="entry name" value="Aldolase_TIM"/>
</dbReference>
<dbReference type="InterPro" id="IPR036206">
    <property type="entry name" value="ThiamineP_synth_sf"/>
</dbReference>
<dbReference type="InterPro" id="IPR022998">
    <property type="entry name" value="ThiamineP_synth_TenI"/>
</dbReference>
<dbReference type="InterPro" id="IPR034291">
    <property type="entry name" value="TMP_synthase"/>
</dbReference>
<dbReference type="NCBIfam" id="NF002904">
    <property type="entry name" value="PRK03512.1"/>
    <property type="match status" value="1"/>
</dbReference>
<dbReference type="NCBIfam" id="TIGR00693">
    <property type="entry name" value="thiE"/>
    <property type="match status" value="1"/>
</dbReference>
<dbReference type="PANTHER" id="PTHR20857">
    <property type="entry name" value="THIAMINE-PHOSPHATE PYROPHOSPHORYLASE"/>
    <property type="match status" value="1"/>
</dbReference>
<dbReference type="PANTHER" id="PTHR20857:SF15">
    <property type="entry name" value="THIAMINE-PHOSPHATE SYNTHASE"/>
    <property type="match status" value="1"/>
</dbReference>
<dbReference type="Pfam" id="PF02581">
    <property type="entry name" value="TMP-TENI"/>
    <property type="match status" value="1"/>
</dbReference>
<dbReference type="SUPFAM" id="SSF51391">
    <property type="entry name" value="Thiamin phosphate synthase"/>
    <property type="match status" value="1"/>
</dbReference>